<dbReference type="EMBL" id="BC158789">
    <property type="protein sequence ID" value="AAI58790.1"/>
    <property type="molecule type" value="mRNA"/>
</dbReference>
<dbReference type="RefSeq" id="NP_001107251.1">
    <property type="nucleotide sequence ID" value="NM_001113779.1"/>
</dbReference>
<dbReference type="SMR" id="B0BNE4"/>
<dbReference type="FunCoup" id="B0BNE4">
    <property type="interactions" value="265"/>
</dbReference>
<dbReference type="STRING" id="10116.ENSRNOP00000050572"/>
<dbReference type="PhosphoSitePlus" id="B0BNE4"/>
<dbReference type="PaxDb" id="10116-ENSRNOP00000050572"/>
<dbReference type="PeptideAtlas" id="B0BNE4"/>
<dbReference type="GeneID" id="307920"/>
<dbReference type="KEGG" id="rno:307920"/>
<dbReference type="UCSC" id="RGD:1562761">
    <property type="organism name" value="rat"/>
</dbReference>
<dbReference type="AGR" id="RGD:1562761"/>
<dbReference type="CTD" id="390748"/>
<dbReference type="RGD" id="1562761">
    <property type="gene designation" value="Pabpn1l"/>
</dbReference>
<dbReference type="VEuPathDB" id="HostDB:ENSRNOG00000029558"/>
<dbReference type="eggNOG" id="KOG4209">
    <property type="taxonomic scope" value="Eukaryota"/>
</dbReference>
<dbReference type="HOGENOM" id="CLU_012062_23_2_1"/>
<dbReference type="InParanoid" id="B0BNE4"/>
<dbReference type="OrthoDB" id="87185at9989"/>
<dbReference type="PhylomeDB" id="B0BNE4"/>
<dbReference type="PRO" id="PR:B0BNE4"/>
<dbReference type="Proteomes" id="UP000002494">
    <property type="component" value="Chromosome 19"/>
</dbReference>
<dbReference type="Bgee" id="ENSRNOG00000029558">
    <property type="expression patterns" value="Expressed in thymus and 4 other cell types or tissues"/>
</dbReference>
<dbReference type="GO" id="GO:0005737">
    <property type="term" value="C:cytoplasm"/>
    <property type="evidence" value="ECO:0000266"/>
    <property type="project" value="RGD"/>
</dbReference>
<dbReference type="GO" id="GO:0005634">
    <property type="term" value="C:nucleus"/>
    <property type="evidence" value="ECO:0000318"/>
    <property type="project" value="GO_Central"/>
</dbReference>
<dbReference type="GO" id="GO:0008143">
    <property type="term" value="F:poly(A) binding"/>
    <property type="evidence" value="ECO:0000266"/>
    <property type="project" value="RGD"/>
</dbReference>
<dbReference type="GO" id="GO:0003723">
    <property type="term" value="F:RNA binding"/>
    <property type="evidence" value="ECO:0000266"/>
    <property type="project" value="RGD"/>
</dbReference>
<dbReference type="GO" id="GO:0160021">
    <property type="term" value="P:maternal-to-zygotic transition of gene expression"/>
    <property type="evidence" value="ECO:0000266"/>
    <property type="project" value="RGD"/>
</dbReference>
<dbReference type="GO" id="GO:0031397">
    <property type="term" value="P:negative regulation of protein ubiquitination"/>
    <property type="evidence" value="ECO:0000266"/>
    <property type="project" value="RGD"/>
</dbReference>
<dbReference type="GO" id="GO:0062026">
    <property type="term" value="P:negative regulation of SCF-dependent proteasomal ubiquitin-dependent catabolic process"/>
    <property type="evidence" value="ECO:0000266"/>
    <property type="project" value="RGD"/>
</dbReference>
<dbReference type="GO" id="GO:0000288">
    <property type="term" value="P:nuclear-transcribed mRNA catabolic process, deadenylation-dependent decay"/>
    <property type="evidence" value="ECO:0000266"/>
    <property type="project" value="RGD"/>
</dbReference>
<dbReference type="Gene3D" id="3.30.70.330">
    <property type="match status" value="1"/>
</dbReference>
<dbReference type="InterPro" id="IPR012677">
    <property type="entry name" value="Nucleotide-bd_a/b_plait_sf"/>
</dbReference>
<dbReference type="InterPro" id="IPR035979">
    <property type="entry name" value="RBD_domain_sf"/>
</dbReference>
<dbReference type="InterPro" id="IPR000504">
    <property type="entry name" value="RRM_dom"/>
</dbReference>
<dbReference type="PANTHER" id="PTHR23236:SF27">
    <property type="entry name" value="EMBRYONIC POLYADENYLATE-BINDING PROTEIN 2"/>
    <property type="match status" value="1"/>
</dbReference>
<dbReference type="PANTHER" id="PTHR23236">
    <property type="entry name" value="EUKARYOTIC TRANSLATION INITIATION FACTOR 4B/4H"/>
    <property type="match status" value="1"/>
</dbReference>
<dbReference type="Pfam" id="PF00076">
    <property type="entry name" value="RRM_1"/>
    <property type="match status" value="1"/>
</dbReference>
<dbReference type="SMART" id="SM00360">
    <property type="entry name" value="RRM"/>
    <property type="match status" value="1"/>
</dbReference>
<dbReference type="SUPFAM" id="SSF54928">
    <property type="entry name" value="RNA-binding domain, RBD"/>
    <property type="match status" value="1"/>
</dbReference>
<dbReference type="PROSITE" id="PS50102">
    <property type="entry name" value="RRM"/>
    <property type="match status" value="1"/>
</dbReference>
<organism>
    <name type="scientific">Rattus norvegicus</name>
    <name type="common">Rat</name>
    <dbReference type="NCBI Taxonomy" id="10116"/>
    <lineage>
        <taxon>Eukaryota</taxon>
        <taxon>Metazoa</taxon>
        <taxon>Chordata</taxon>
        <taxon>Craniata</taxon>
        <taxon>Vertebrata</taxon>
        <taxon>Euteleostomi</taxon>
        <taxon>Mammalia</taxon>
        <taxon>Eutheria</taxon>
        <taxon>Euarchontoglires</taxon>
        <taxon>Glires</taxon>
        <taxon>Rodentia</taxon>
        <taxon>Myomorpha</taxon>
        <taxon>Muroidea</taxon>
        <taxon>Muridae</taxon>
        <taxon>Murinae</taxon>
        <taxon>Rattus</taxon>
    </lineage>
</organism>
<reference key="1">
    <citation type="journal article" date="2004" name="Genome Res.">
        <title>The status, quality, and expansion of the NIH full-length cDNA project: the Mammalian Gene Collection (MGC).</title>
        <authorList>
            <consortium name="The MGC Project Team"/>
        </authorList>
    </citation>
    <scope>NUCLEOTIDE SEQUENCE [LARGE SCALE MRNA]</scope>
    <source>
        <tissue>Ovary</tissue>
    </source>
</reference>
<evidence type="ECO:0000250" key="1"/>
<evidence type="ECO:0000255" key="2">
    <source>
        <dbReference type="PROSITE-ProRule" id="PRU00176"/>
    </source>
</evidence>
<evidence type="ECO:0000256" key="3">
    <source>
        <dbReference type="SAM" id="MobiDB-lite"/>
    </source>
</evidence>
<proteinExistence type="evidence at transcript level"/>
<accession>B0BNE4</accession>
<sequence>MWPSLSNELFPPPTEVWLQTVSSDPEAQGWGAWGRTEKTSLVPSAGSDKEAEENEDSSFLLSLLEPENLAKSPVYNQELEAIRLKLWTMEHAEVLPEPPSVQRKATEEERAEARELLSPETIGCFFPGAPKENVEADHRSVYVGNVDYGGSAAELEAYFSPCGEIHRVTILCDKFSGHPKGYAYIEFASKSSVQAAVRLDESTFRGRVIKVLPKRTNFPGISSTDRGGLRTHSSSRAAFLQGSLQRKPRLRPHGQSRGRGRASPWFSPY</sequence>
<keyword id="KW-0963">Cytoplasm</keyword>
<keyword id="KW-1185">Reference proteome</keyword>
<keyword id="KW-0694">RNA-binding</keyword>
<feature type="chain" id="PRO_0000349173" description="Embryonic polyadenylate-binding protein 2">
    <location>
        <begin position="1"/>
        <end position="269"/>
    </location>
</feature>
<feature type="domain" description="RRM" evidence="2">
    <location>
        <begin position="139"/>
        <end position="216"/>
    </location>
</feature>
<feature type="region of interest" description="Disordered" evidence="3">
    <location>
        <begin position="26"/>
        <end position="54"/>
    </location>
</feature>
<feature type="region of interest" description="Disordered" evidence="3">
    <location>
        <begin position="240"/>
        <end position="269"/>
    </location>
</feature>
<feature type="compositionally biased region" description="Basic residues" evidence="3">
    <location>
        <begin position="246"/>
        <end position="260"/>
    </location>
</feature>
<name>EPAB2_RAT</name>
<gene>
    <name type="primary">Pabpn1l</name>
    <name type="synonym">Epabp2</name>
    <name type="synonym">Pabpnl1</name>
</gene>
<protein>
    <recommendedName>
        <fullName>Embryonic polyadenylate-binding protein 2</fullName>
        <shortName>Embryonic poly(A)-binding protein 2</shortName>
        <shortName>ePABP-2</shortName>
        <shortName>ePABP2</shortName>
    </recommendedName>
    <alternativeName>
        <fullName>Embryonic poly(A)-binding protein type II</fullName>
    </alternativeName>
    <alternativeName>
        <fullName>Poly(A)-binding protein nuclear-like 1</fullName>
    </alternativeName>
</protein>
<comment type="function">
    <text evidence="1">Binds the poly(A) tail of mRNA.</text>
</comment>
<comment type="subcellular location">
    <subcellularLocation>
        <location evidence="1">Cytoplasm</location>
    </subcellularLocation>
</comment>